<proteinExistence type="inferred from homology"/>
<reference key="1">
    <citation type="journal article" date="2001" name="Lancet">
        <title>Whole genome sequencing of meticillin-resistant Staphylococcus aureus.</title>
        <authorList>
            <person name="Kuroda M."/>
            <person name="Ohta T."/>
            <person name="Uchiyama I."/>
            <person name="Baba T."/>
            <person name="Yuzawa H."/>
            <person name="Kobayashi I."/>
            <person name="Cui L."/>
            <person name="Oguchi A."/>
            <person name="Aoki K."/>
            <person name="Nagai Y."/>
            <person name="Lian J.-Q."/>
            <person name="Ito T."/>
            <person name="Kanamori M."/>
            <person name="Matsumaru H."/>
            <person name="Maruyama A."/>
            <person name="Murakami H."/>
            <person name="Hosoyama A."/>
            <person name="Mizutani-Ui Y."/>
            <person name="Takahashi N.K."/>
            <person name="Sawano T."/>
            <person name="Inoue R."/>
            <person name="Kaito C."/>
            <person name="Sekimizu K."/>
            <person name="Hirakawa H."/>
            <person name="Kuhara S."/>
            <person name="Goto S."/>
            <person name="Yabuzaki J."/>
            <person name="Kanehisa M."/>
            <person name="Yamashita A."/>
            <person name="Oshima K."/>
            <person name="Furuya K."/>
            <person name="Yoshino C."/>
            <person name="Shiba T."/>
            <person name="Hattori M."/>
            <person name="Ogasawara N."/>
            <person name="Hayashi H."/>
            <person name="Hiramatsu K."/>
        </authorList>
    </citation>
    <scope>NUCLEOTIDE SEQUENCE [LARGE SCALE GENOMIC DNA]</scope>
    <source>
        <strain>Mu50 / ATCC 700699</strain>
    </source>
</reference>
<dbReference type="EC" id="3.1.-.-" evidence="1"/>
<dbReference type="EMBL" id="BA000017">
    <property type="protein sequence ID" value="BAB57177.1"/>
    <property type="molecule type" value="Genomic_DNA"/>
</dbReference>
<dbReference type="RefSeq" id="WP_000600387.1">
    <property type="nucleotide sequence ID" value="NC_002758.2"/>
</dbReference>
<dbReference type="SMR" id="Q99V77"/>
<dbReference type="KEGG" id="sav:SAV1015"/>
<dbReference type="HOGENOM" id="CLU_132020_0_0_9"/>
<dbReference type="PhylomeDB" id="Q99V77"/>
<dbReference type="Proteomes" id="UP000002481">
    <property type="component" value="Chromosome"/>
</dbReference>
<dbReference type="GO" id="GO:0016788">
    <property type="term" value="F:hydrolase activity, acting on ester bonds"/>
    <property type="evidence" value="ECO:0007669"/>
    <property type="project" value="UniProtKB-UniRule"/>
</dbReference>
<dbReference type="Gene3D" id="3.90.1140.10">
    <property type="entry name" value="Cyclic phosphodiesterase"/>
    <property type="match status" value="1"/>
</dbReference>
<dbReference type="HAMAP" id="MF_01444">
    <property type="entry name" value="2H_phosphoesterase_YjcG"/>
    <property type="match status" value="1"/>
</dbReference>
<dbReference type="InterPro" id="IPR050580">
    <property type="entry name" value="2H_phosphoesterase_YjcG-like"/>
</dbReference>
<dbReference type="InterPro" id="IPR009097">
    <property type="entry name" value="Cyclic_Pdiesterase"/>
</dbReference>
<dbReference type="InterPro" id="IPR022932">
    <property type="entry name" value="YjcG"/>
</dbReference>
<dbReference type="NCBIfam" id="NF010223">
    <property type="entry name" value="PRK13679.1"/>
    <property type="match status" value="1"/>
</dbReference>
<dbReference type="PANTHER" id="PTHR40037:SF1">
    <property type="entry name" value="PHOSPHOESTERASE SAOUHSC_00951-RELATED"/>
    <property type="match status" value="1"/>
</dbReference>
<dbReference type="PANTHER" id="PTHR40037">
    <property type="entry name" value="PHOSPHOESTERASE YJCG-RELATED"/>
    <property type="match status" value="1"/>
</dbReference>
<dbReference type="Pfam" id="PF13563">
    <property type="entry name" value="2_5_RNA_ligase2"/>
    <property type="match status" value="1"/>
</dbReference>
<dbReference type="SUPFAM" id="SSF55144">
    <property type="entry name" value="LigT-like"/>
    <property type="match status" value="1"/>
</dbReference>
<gene>
    <name type="ordered locus">SAV1015</name>
</gene>
<protein>
    <recommendedName>
        <fullName evidence="1">Putative phosphoesterase SAV1015</fullName>
        <ecNumber evidence="1">3.1.-.-</ecNumber>
    </recommendedName>
</protein>
<accession>Q99V77</accession>
<evidence type="ECO:0000255" key="1">
    <source>
        <dbReference type="HAMAP-Rule" id="MF_01444"/>
    </source>
</evidence>
<comment type="similarity">
    <text evidence="1">Belongs to the 2H phosphoesterase superfamily. YjcG family.</text>
</comment>
<organism>
    <name type="scientific">Staphylococcus aureus (strain Mu50 / ATCC 700699)</name>
    <dbReference type="NCBI Taxonomy" id="158878"/>
    <lineage>
        <taxon>Bacteria</taxon>
        <taxon>Bacillati</taxon>
        <taxon>Bacillota</taxon>
        <taxon>Bacilli</taxon>
        <taxon>Bacillales</taxon>
        <taxon>Staphylococcaceae</taxon>
        <taxon>Staphylococcus</taxon>
    </lineage>
</organism>
<feature type="chain" id="PRO_0000299341" description="Putative phosphoesterase SAV1015">
    <location>
        <begin position="1"/>
        <end position="169"/>
    </location>
</feature>
<feature type="short sequence motif" description="HXTX 1" evidence="1">
    <location>
        <begin position="34"/>
        <end position="37"/>
    </location>
</feature>
<feature type="short sequence motif" description="HXTX 2" evidence="1">
    <location>
        <begin position="115"/>
        <end position="118"/>
    </location>
</feature>
<feature type="active site" description="Proton donor" evidence="1">
    <location>
        <position position="34"/>
    </location>
</feature>
<feature type="active site" description="Proton acceptor" evidence="1">
    <location>
        <position position="115"/>
    </location>
</feature>
<name>Y1015_STAAM</name>
<keyword id="KW-0378">Hydrolase</keyword>
<sequence length="169" mass="19327">MILGLALIPSKSFQEAVDSYRKRYDKQYSRIKPHVTIKAPFEIEDGDLDSVIEQVRARINGIPAVEVHATKASSFKPTNNVIYFKVAKTDDLEELFNRFNGEDFYGEAEHVFVPHFTIAQGLSSQEFEDIFGQVALAGVDHKEIIDELTLLRFDDDEDKWKVIETFKLA</sequence>